<dbReference type="EMBL" id="CP000153">
    <property type="protein sequence ID" value="ABB43607.1"/>
    <property type="molecule type" value="Genomic_DNA"/>
</dbReference>
<dbReference type="RefSeq" id="WP_011371961.1">
    <property type="nucleotide sequence ID" value="NC_007575.1"/>
</dbReference>
<dbReference type="SMR" id="Q30TS4"/>
<dbReference type="STRING" id="326298.Suden_0326"/>
<dbReference type="KEGG" id="tdn:Suden_0326"/>
<dbReference type="eggNOG" id="COG0522">
    <property type="taxonomic scope" value="Bacteria"/>
</dbReference>
<dbReference type="HOGENOM" id="CLU_092403_0_2_7"/>
<dbReference type="OrthoDB" id="9803672at2"/>
<dbReference type="Proteomes" id="UP000002714">
    <property type="component" value="Chromosome"/>
</dbReference>
<dbReference type="GO" id="GO:0015935">
    <property type="term" value="C:small ribosomal subunit"/>
    <property type="evidence" value="ECO:0007669"/>
    <property type="project" value="InterPro"/>
</dbReference>
<dbReference type="GO" id="GO:0019843">
    <property type="term" value="F:rRNA binding"/>
    <property type="evidence" value="ECO:0007669"/>
    <property type="project" value="UniProtKB-UniRule"/>
</dbReference>
<dbReference type="GO" id="GO:0003735">
    <property type="term" value="F:structural constituent of ribosome"/>
    <property type="evidence" value="ECO:0007669"/>
    <property type="project" value="InterPro"/>
</dbReference>
<dbReference type="GO" id="GO:0042274">
    <property type="term" value="P:ribosomal small subunit biogenesis"/>
    <property type="evidence" value="ECO:0007669"/>
    <property type="project" value="TreeGrafter"/>
</dbReference>
<dbReference type="GO" id="GO:0006412">
    <property type="term" value="P:translation"/>
    <property type="evidence" value="ECO:0007669"/>
    <property type="project" value="UniProtKB-UniRule"/>
</dbReference>
<dbReference type="CDD" id="cd00165">
    <property type="entry name" value="S4"/>
    <property type="match status" value="1"/>
</dbReference>
<dbReference type="FunFam" id="1.10.1050.10:FF:000001">
    <property type="entry name" value="30S ribosomal protein S4"/>
    <property type="match status" value="1"/>
</dbReference>
<dbReference type="FunFam" id="3.10.290.10:FF:000001">
    <property type="entry name" value="30S ribosomal protein S4"/>
    <property type="match status" value="1"/>
</dbReference>
<dbReference type="Gene3D" id="1.10.1050.10">
    <property type="entry name" value="Ribosomal Protein S4 Delta 41, Chain A, domain 1"/>
    <property type="match status" value="1"/>
</dbReference>
<dbReference type="Gene3D" id="3.10.290.10">
    <property type="entry name" value="RNA-binding S4 domain"/>
    <property type="match status" value="1"/>
</dbReference>
<dbReference type="HAMAP" id="MF_01306_B">
    <property type="entry name" value="Ribosomal_uS4_B"/>
    <property type="match status" value="1"/>
</dbReference>
<dbReference type="InterPro" id="IPR022801">
    <property type="entry name" value="Ribosomal_uS4"/>
</dbReference>
<dbReference type="InterPro" id="IPR005709">
    <property type="entry name" value="Ribosomal_uS4_bac-type"/>
</dbReference>
<dbReference type="InterPro" id="IPR018079">
    <property type="entry name" value="Ribosomal_uS4_CS"/>
</dbReference>
<dbReference type="InterPro" id="IPR001912">
    <property type="entry name" value="Ribosomal_uS4_N"/>
</dbReference>
<dbReference type="InterPro" id="IPR002942">
    <property type="entry name" value="S4_RNA-bd"/>
</dbReference>
<dbReference type="InterPro" id="IPR036986">
    <property type="entry name" value="S4_RNA-bd_sf"/>
</dbReference>
<dbReference type="NCBIfam" id="NF003717">
    <property type="entry name" value="PRK05327.1"/>
    <property type="match status" value="1"/>
</dbReference>
<dbReference type="NCBIfam" id="TIGR01017">
    <property type="entry name" value="rpsD_bact"/>
    <property type="match status" value="1"/>
</dbReference>
<dbReference type="PANTHER" id="PTHR11831">
    <property type="entry name" value="30S 40S RIBOSOMAL PROTEIN"/>
    <property type="match status" value="1"/>
</dbReference>
<dbReference type="PANTHER" id="PTHR11831:SF4">
    <property type="entry name" value="SMALL RIBOSOMAL SUBUNIT PROTEIN US4M"/>
    <property type="match status" value="1"/>
</dbReference>
<dbReference type="Pfam" id="PF00163">
    <property type="entry name" value="Ribosomal_S4"/>
    <property type="match status" value="1"/>
</dbReference>
<dbReference type="Pfam" id="PF01479">
    <property type="entry name" value="S4"/>
    <property type="match status" value="1"/>
</dbReference>
<dbReference type="SMART" id="SM01390">
    <property type="entry name" value="Ribosomal_S4"/>
    <property type="match status" value="1"/>
</dbReference>
<dbReference type="SMART" id="SM00363">
    <property type="entry name" value="S4"/>
    <property type="match status" value="1"/>
</dbReference>
<dbReference type="SUPFAM" id="SSF55174">
    <property type="entry name" value="Alpha-L RNA-binding motif"/>
    <property type="match status" value="1"/>
</dbReference>
<dbReference type="PROSITE" id="PS00632">
    <property type="entry name" value="RIBOSOMAL_S4"/>
    <property type="match status" value="1"/>
</dbReference>
<dbReference type="PROSITE" id="PS50889">
    <property type="entry name" value="S4"/>
    <property type="match status" value="1"/>
</dbReference>
<name>RS4_SULDN</name>
<gene>
    <name evidence="1" type="primary">rpsD</name>
    <name type="ordered locus">Suden_0326</name>
</gene>
<accession>Q30TS4</accession>
<keyword id="KW-1185">Reference proteome</keyword>
<keyword id="KW-0687">Ribonucleoprotein</keyword>
<keyword id="KW-0689">Ribosomal protein</keyword>
<keyword id="KW-0694">RNA-binding</keyword>
<keyword id="KW-0699">rRNA-binding</keyword>
<protein>
    <recommendedName>
        <fullName evidence="1">Small ribosomal subunit protein uS4</fullName>
    </recommendedName>
    <alternativeName>
        <fullName evidence="2">30S ribosomal protein S4</fullName>
    </alternativeName>
</protein>
<reference key="1">
    <citation type="journal article" date="2008" name="Appl. Environ. Microbiol.">
        <title>Genome of the epsilonproteobacterial chemolithoautotroph Sulfurimonas denitrificans.</title>
        <authorList>
            <person name="Sievert S.M."/>
            <person name="Scott K.M."/>
            <person name="Klotz M.G."/>
            <person name="Chain P.S.G."/>
            <person name="Hauser L.J."/>
            <person name="Hemp J."/>
            <person name="Huegler M."/>
            <person name="Land M."/>
            <person name="Lapidus A."/>
            <person name="Larimer F.W."/>
            <person name="Lucas S."/>
            <person name="Malfatti S.A."/>
            <person name="Meyer F."/>
            <person name="Paulsen I.T."/>
            <person name="Ren Q."/>
            <person name="Simon J."/>
            <person name="Bailey K."/>
            <person name="Diaz E."/>
            <person name="Fitzpatrick K.A."/>
            <person name="Glover B."/>
            <person name="Gwatney N."/>
            <person name="Korajkic A."/>
            <person name="Long A."/>
            <person name="Mobberley J.M."/>
            <person name="Pantry S.N."/>
            <person name="Pazder G."/>
            <person name="Peterson S."/>
            <person name="Quintanilla J.D."/>
            <person name="Sprinkle R."/>
            <person name="Stephens J."/>
            <person name="Thomas P."/>
            <person name="Vaughn R."/>
            <person name="Weber M.J."/>
            <person name="Wooten L.L."/>
        </authorList>
    </citation>
    <scope>NUCLEOTIDE SEQUENCE [LARGE SCALE GENOMIC DNA]</scope>
    <source>
        <strain>ATCC 33889 / DSM 1251</strain>
    </source>
</reference>
<sequence>MARYRGPVEKIERRFGVSLNLKGERRLAGKSALEKRPYAPGQHGQRRKKVSEYGLQLNEKQKAKFMYGVSEKQFRALFVEAKRREGNTGTNLVTLIEQRLDNVVYRMGFATTRRFARQLVTHGHLLVDGAKLDIPSYRVRPGQKIEIRESSKNNSQIVRALELTNQTGLAPWVDIDADKKFGIFTRLPEREEVVIPVEERLIVELYSK</sequence>
<comment type="function">
    <text evidence="1">One of the primary rRNA binding proteins, it binds directly to 16S rRNA where it nucleates assembly of the body of the 30S subunit.</text>
</comment>
<comment type="function">
    <text evidence="1">With S5 and S12 plays an important role in translational accuracy.</text>
</comment>
<comment type="subunit">
    <text evidence="1">Part of the 30S ribosomal subunit. Contacts protein S5. The interaction surface between S4 and S5 is involved in control of translational fidelity.</text>
</comment>
<comment type="similarity">
    <text evidence="1">Belongs to the universal ribosomal protein uS4 family.</text>
</comment>
<proteinExistence type="inferred from homology"/>
<organism>
    <name type="scientific">Sulfurimonas denitrificans (strain ATCC 33889 / DSM 1251)</name>
    <name type="common">Thiomicrospira denitrificans (strain ATCC 33889 / DSM 1251)</name>
    <dbReference type="NCBI Taxonomy" id="326298"/>
    <lineage>
        <taxon>Bacteria</taxon>
        <taxon>Pseudomonadati</taxon>
        <taxon>Campylobacterota</taxon>
        <taxon>Epsilonproteobacteria</taxon>
        <taxon>Campylobacterales</taxon>
        <taxon>Sulfurimonadaceae</taxon>
        <taxon>Sulfurimonas</taxon>
    </lineage>
</organism>
<feature type="chain" id="PRO_0000228937" description="Small ribosomal subunit protein uS4">
    <location>
        <begin position="1"/>
        <end position="208"/>
    </location>
</feature>
<feature type="domain" description="S4 RNA-binding" evidence="1">
    <location>
        <begin position="98"/>
        <end position="160"/>
    </location>
</feature>
<evidence type="ECO:0000255" key="1">
    <source>
        <dbReference type="HAMAP-Rule" id="MF_01306"/>
    </source>
</evidence>
<evidence type="ECO:0000305" key="2"/>